<feature type="chain" id="PRO_0000358959" description="Acetyl-coenzyme A carboxylase carboxyl transferase subunit beta">
    <location>
        <begin position="1"/>
        <end position="290"/>
    </location>
</feature>
<feature type="domain" description="CoA carboxyltransferase N-terminal" evidence="2">
    <location>
        <begin position="27"/>
        <end position="290"/>
    </location>
</feature>
<feature type="zinc finger region" description="C4-type" evidence="1">
    <location>
        <begin position="31"/>
        <end position="53"/>
    </location>
</feature>
<feature type="binding site" evidence="1">
    <location>
        <position position="31"/>
    </location>
    <ligand>
        <name>Zn(2+)</name>
        <dbReference type="ChEBI" id="CHEBI:29105"/>
    </ligand>
</feature>
<feature type="binding site" evidence="1">
    <location>
        <position position="34"/>
    </location>
    <ligand>
        <name>Zn(2+)</name>
        <dbReference type="ChEBI" id="CHEBI:29105"/>
    </ligand>
</feature>
<feature type="binding site" evidence="1">
    <location>
        <position position="50"/>
    </location>
    <ligand>
        <name>Zn(2+)</name>
        <dbReference type="ChEBI" id="CHEBI:29105"/>
    </ligand>
</feature>
<feature type="binding site" evidence="1">
    <location>
        <position position="53"/>
    </location>
    <ligand>
        <name>Zn(2+)</name>
        <dbReference type="ChEBI" id="CHEBI:29105"/>
    </ligand>
</feature>
<organism>
    <name type="scientific">Burkholderia cenocepacia (strain ATCC BAA-245 / DSM 16553 / LMG 16656 / NCTC 13227 / J2315 / CF5610)</name>
    <name type="common">Burkholderia cepacia (strain J2315)</name>
    <dbReference type="NCBI Taxonomy" id="216591"/>
    <lineage>
        <taxon>Bacteria</taxon>
        <taxon>Pseudomonadati</taxon>
        <taxon>Pseudomonadota</taxon>
        <taxon>Betaproteobacteria</taxon>
        <taxon>Burkholderiales</taxon>
        <taxon>Burkholderiaceae</taxon>
        <taxon>Burkholderia</taxon>
        <taxon>Burkholderia cepacia complex</taxon>
    </lineage>
</organism>
<name>ACCD_BURCJ</name>
<evidence type="ECO:0000255" key="1">
    <source>
        <dbReference type="HAMAP-Rule" id="MF_01395"/>
    </source>
</evidence>
<evidence type="ECO:0000255" key="2">
    <source>
        <dbReference type="PROSITE-ProRule" id="PRU01136"/>
    </source>
</evidence>
<keyword id="KW-0067">ATP-binding</keyword>
<keyword id="KW-0963">Cytoplasm</keyword>
<keyword id="KW-0275">Fatty acid biosynthesis</keyword>
<keyword id="KW-0276">Fatty acid metabolism</keyword>
<keyword id="KW-0444">Lipid biosynthesis</keyword>
<keyword id="KW-0443">Lipid metabolism</keyword>
<keyword id="KW-0479">Metal-binding</keyword>
<keyword id="KW-0547">Nucleotide-binding</keyword>
<keyword id="KW-0808">Transferase</keyword>
<keyword id="KW-0862">Zinc</keyword>
<keyword id="KW-0863">Zinc-finger</keyword>
<reference key="1">
    <citation type="journal article" date="2009" name="J. Bacteriol.">
        <title>The genome of Burkholderia cenocepacia J2315, an epidemic pathogen of cystic fibrosis patients.</title>
        <authorList>
            <person name="Holden M.T."/>
            <person name="Seth-Smith H.M."/>
            <person name="Crossman L.C."/>
            <person name="Sebaihia M."/>
            <person name="Bentley S.D."/>
            <person name="Cerdeno-Tarraga A.M."/>
            <person name="Thomson N.R."/>
            <person name="Bason N."/>
            <person name="Quail M.A."/>
            <person name="Sharp S."/>
            <person name="Cherevach I."/>
            <person name="Churcher C."/>
            <person name="Goodhead I."/>
            <person name="Hauser H."/>
            <person name="Holroyd N."/>
            <person name="Mungall K."/>
            <person name="Scott P."/>
            <person name="Walker D."/>
            <person name="White B."/>
            <person name="Rose H."/>
            <person name="Iversen P."/>
            <person name="Mil-Homens D."/>
            <person name="Rocha E.P."/>
            <person name="Fialho A.M."/>
            <person name="Baldwin A."/>
            <person name="Dowson C."/>
            <person name="Barrell B.G."/>
            <person name="Govan J.R."/>
            <person name="Vandamme P."/>
            <person name="Hart C.A."/>
            <person name="Mahenthiralingam E."/>
            <person name="Parkhill J."/>
        </authorList>
    </citation>
    <scope>NUCLEOTIDE SEQUENCE [LARGE SCALE GENOMIC DNA]</scope>
    <source>
        <strain>ATCC BAA-245 / DSM 16553 / LMG 16656 / NCTC 13227 / J2315 / CF5610</strain>
    </source>
</reference>
<gene>
    <name evidence="1" type="primary">accD</name>
    <name type="ordered locus">BceJ2315_44500</name>
    <name type="ORF">BCAM0994</name>
</gene>
<sequence>MSWLDKLLPPKIKQTDPKSRKGIPEGLWVKCPSCEAVLYRNDVDANLHVCPKCDHHMRIGARERLDGLLDPEGRYEIGQEIVPVDTLKFKDSRKYPDRLKEAMDETGETDAMVVMGGAIHTLPVVAACFEFSFMGGSMGSVVGERFARGAQNALEQHVPFICFTASGGARMQESLLSLMQMAKTTAMLTKLAEAKLPFISVLTDPTMGGVSASFAFLGDVVIAEPKALIGFAGPRVIEQTVREKLPEGFQRAEFLLKTGAIDMIVDRRKMRDEIAQLLALLQRQPADALA</sequence>
<proteinExistence type="inferred from homology"/>
<comment type="function">
    <text evidence="1">Component of the acetyl coenzyme A carboxylase (ACC) complex. Biotin carboxylase (BC) catalyzes the carboxylation of biotin on its carrier protein (BCCP) and then the CO(2) group is transferred by the transcarboxylase to acetyl-CoA to form malonyl-CoA.</text>
</comment>
<comment type="catalytic activity">
    <reaction evidence="1">
        <text>N(6)-carboxybiotinyl-L-lysyl-[protein] + acetyl-CoA = N(6)-biotinyl-L-lysyl-[protein] + malonyl-CoA</text>
        <dbReference type="Rhea" id="RHEA:54728"/>
        <dbReference type="Rhea" id="RHEA-COMP:10505"/>
        <dbReference type="Rhea" id="RHEA-COMP:10506"/>
        <dbReference type="ChEBI" id="CHEBI:57288"/>
        <dbReference type="ChEBI" id="CHEBI:57384"/>
        <dbReference type="ChEBI" id="CHEBI:83144"/>
        <dbReference type="ChEBI" id="CHEBI:83145"/>
        <dbReference type="EC" id="2.1.3.15"/>
    </reaction>
</comment>
<comment type="cofactor">
    <cofactor evidence="1">
        <name>Zn(2+)</name>
        <dbReference type="ChEBI" id="CHEBI:29105"/>
    </cofactor>
    <text evidence="1">Binds 1 zinc ion per subunit.</text>
</comment>
<comment type="pathway">
    <text evidence="1">Lipid metabolism; malonyl-CoA biosynthesis; malonyl-CoA from acetyl-CoA: step 1/1.</text>
</comment>
<comment type="subunit">
    <text evidence="1">Acetyl-CoA carboxylase is a heterohexamer composed of biotin carboxyl carrier protein (AccB), biotin carboxylase (AccC) and two subunits each of ACCase subunit alpha (AccA) and ACCase subunit beta (AccD).</text>
</comment>
<comment type="subcellular location">
    <subcellularLocation>
        <location evidence="1">Cytoplasm</location>
    </subcellularLocation>
</comment>
<comment type="similarity">
    <text evidence="1">Belongs to the AccD/PCCB family.</text>
</comment>
<accession>B4EFK3</accession>
<protein>
    <recommendedName>
        <fullName evidence="1">Acetyl-coenzyme A carboxylase carboxyl transferase subunit beta</fullName>
        <shortName evidence="1">ACCase subunit beta</shortName>
        <shortName evidence="1">Acetyl-CoA carboxylase carboxyltransferase subunit beta</shortName>
        <ecNumber evidence="1">2.1.3.15</ecNumber>
    </recommendedName>
</protein>
<dbReference type="EC" id="2.1.3.15" evidence="1"/>
<dbReference type="EMBL" id="AM747721">
    <property type="protein sequence ID" value="CAR54852.1"/>
    <property type="molecule type" value="Genomic_DNA"/>
</dbReference>
<dbReference type="RefSeq" id="WP_006484412.1">
    <property type="nucleotide sequence ID" value="NC_011001.1"/>
</dbReference>
<dbReference type="SMR" id="B4EFK3"/>
<dbReference type="GeneID" id="62014454"/>
<dbReference type="KEGG" id="bcj:BCAM0994"/>
<dbReference type="eggNOG" id="COG0777">
    <property type="taxonomic scope" value="Bacteria"/>
</dbReference>
<dbReference type="HOGENOM" id="CLU_015486_1_0_4"/>
<dbReference type="BioCyc" id="BCEN216591:G1G1V-4987-MONOMER"/>
<dbReference type="UniPathway" id="UPA00655">
    <property type="reaction ID" value="UER00711"/>
</dbReference>
<dbReference type="Proteomes" id="UP000001035">
    <property type="component" value="Chromosome 2"/>
</dbReference>
<dbReference type="GO" id="GO:0009329">
    <property type="term" value="C:acetate CoA-transferase complex"/>
    <property type="evidence" value="ECO:0007669"/>
    <property type="project" value="TreeGrafter"/>
</dbReference>
<dbReference type="GO" id="GO:0003989">
    <property type="term" value="F:acetyl-CoA carboxylase activity"/>
    <property type="evidence" value="ECO:0007669"/>
    <property type="project" value="InterPro"/>
</dbReference>
<dbReference type="GO" id="GO:0005524">
    <property type="term" value="F:ATP binding"/>
    <property type="evidence" value="ECO:0007669"/>
    <property type="project" value="UniProtKB-KW"/>
</dbReference>
<dbReference type="GO" id="GO:0016743">
    <property type="term" value="F:carboxyl- or carbamoyltransferase activity"/>
    <property type="evidence" value="ECO:0007669"/>
    <property type="project" value="UniProtKB-UniRule"/>
</dbReference>
<dbReference type="GO" id="GO:0008270">
    <property type="term" value="F:zinc ion binding"/>
    <property type="evidence" value="ECO:0007669"/>
    <property type="project" value="UniProtKB-UniRule"/>
</dbReference>
<dbReference type="GO" id="GO:0006633">
    <property type="term" value="P:fatty acid biosynthetic process"/>
    <property type="evidence" value="ECO:0007669"/>
    <property type="project" value="UniProtKB-KW"/>
</dbReference>
<dbReference type="GO" id="GO:2001295">
    <property type="term" value="P:malonyl-CoA biosynthetic process"/>
    <property type="evidence" value="ECO:0007669"/>
    <property type="project" value="UniProtKB-UniRule"/>
</dbReference>
<dbReference type="Gene3D" id="3.90.226.10">
    <property type="entry name" value="2-enoyl-CoA Hydratase, Chain A, domain 1"/>
    <property type="match status" value="1"/>
</dbReference>
<dbReference type="HAMAP" id="MF_01395">
    <property type="entry name" value="AcetylCoA_CT_beta"/>
    <property type="match status" value="1"/>
</dbReference>
<dbReference type="InterPro" id="IPR034733">
    <property type="entry name" value="AcCoA_carboxyl_beta"/>
</dbReference>
<dbReference type="InterPro" id="IPR000438">
    <property type="entry name" value="Acetyl_CoA_COase_Trfase_b_su"/>
</dbReference>
<dbReference type="InterPro" id="IPR029045">
    <property type="entry name" value="ClpP/crotonase-like_dom_sf"/>
</dbReference>
<dbReference type="InterPro" id="IPR011762">
    <property type="entry name" value="COA_CT_N"/>
</dbReference>
<dbReference type="InterPro" id="IPR041010">
    <property type="entry name" value="Znf-ACC"/>
</dbReference>
<dbReference type="NCBIfam" id="TIGR00515">
    <property type="entry name" value="accD"/>
    <property type="match status" value="1"/>
</dbReference>
<dbReference type="PANTHER" id="PTHR42995">
    <property type="entry name" value="ACETYL-COENZYME A CARBOXYLASE CARBOXYL TRANSFERASE SUBUNIT BETA, CHLOROPLASTIC"/>
    <property type="match status" value="1"/>
</dbReference>
<dbReference type="PANTHER" id="PTHR42995:SF5">
    <property type="entry name" value="ACETYL-COENZYME A CARBOXYLASE CARBOXYL TRANSFERASE SUBUNIT BETA, CHLOROPLASTIC"/>
    <property type="match status" value="1"/>
</dbReference>
<dbReference type="Pfam" id="PF01039">
    <property type="entry name" value="Carboxyl_trans"/>
    <property type="match status" value="1"/>
</dbReference>
<dbReference type="Pfam" id="PF17848">
    <property type="entry name" value="Zn_ribbon_ACC"/>
    <property type="match status" value="1"/>
</dbReference>
<dbReference type="PRINTS" id="PR01070">
    <property type="entry name" value="ACCCTRFRASEB"/>
</dbReference>
<dbReference type="SUPFAM" id="SSF52096">
    <property type="entry name" value="ClpP/crotonase"/>
    <property type="match status" value="1"/>
</dbReference>
<dbReference type="PROSITE" id="PS50980">
    <property type="entry name" value="COA_CT_NTER"/>
    <property type="match status" value="1"/>
</dbReference>